<sequence length="538" mass="57075">MRHVQAELSPSSEPEAGPSQPPVRQGTLQGGLLMGYSPAGGATSPGVYQVSIFSPSAGASEPPRALKRPAPPTEGPRELKRGPGLGAREGLPPEEPSTVGLLSPEGLGLGLGVASQHFSHHGLCVVEHGGNTTSPWTSGTQSTPWLSSNASFNTLHTRDWAFPDQGGQGCLGETPGPAPSGQLHTLDTDLHNLAQIGGKSPVARVGNGSNPWPRESHGTANGHSPEHTPPGPGPPGPCPTKRRLLPAGETLDVSSEDEGPAPRRRRGTLGCPLAANSSDAKATPFWSHLLPGPKEPVLDPTDCSPMGRRLKGARRLKLSSLRTLRKGPGLLSPPSASPFPTPAVSRTLLGNFEESLLRGRFAPSGHIEGFTAEIGASGSYCPQHVTLPVTVTFFDVSEQNAPAPFLGVVDLTPLGRKGYSVPKVGTIQVTLFNPNQTVVKMFLVTFDFSDMPAAHMTFLRHRLFLVPVGEEGNASPTHRLLCYLLHLRFRSSRSGRLSLHGDIRLLFSRRSLELDTGLPYELQAVTEAPHNPRYSPLP</sequence>
<dbReference type="EMBL" id="AK045811">
    <property type="protein sequence ID" value="BAC32500.1"/>
    <property type="molecule type" value="mRNA"/>
</dbReference>
<dbReference type="EMBL" id="AK149610">
    <property type="protein sequence ID" value="BAE28988.1"/>
    <property type="molecule type" value="mRNA"/>
</dbReference>
<dbReference type="EMBL" id="AK154748">
    <property type="protein sequence ID" value="BAE32803.1"/>
    <property type="molecule type" value="mRNA"/>
</dbReference>
<dbReference type="EMBL" id="AK161380">
    <property type="protein sequence ID" value="BAE36360.1"/>
    <property type="molecule type" value="mRNA"/>
</dbReference>
<dbReference type="EMBL" id="AL672276">
    <property type="protein sequence ID" value="CAM14325.1"/>
    <property type="molecule type" value="Genomic_DNA"/>
</dbReference>
<dbReference type="EMBL" id="AL672276">
    <property type="protein sequence ID" value="CAQ12875.1"/>
    <property type="status" value="ALT_SEQ"/>
    <property type="molecule type" value="Genomic_DNA"/>
</dbReference>
<dbReference type="EMBL" id="BC046771">
    <property type="protein sequence ID" value="AAH46771.1"/>
    <property type="molecule type" value="mRNA"/>
</dbReference>
<dbReference type="EMBL" id="BC071191">
    <property type="protein sequence ID" value="AAH71191.1"/>
    <property type="molecule type" value="mRNA"/>
</dbReference>
<dbReference type="EMBL" id="AK173197">
    <property type="protein sequence ID" value="BAD32475.1"/>
    <property type="molecule type" value="mRNA"/>
</dbReference>
<dbReference type="CCDS" id="CCDS18090.1"/>
<dbReference type="RefSeq" id="NP_001240282.1">
    <property type="nucleotide sequence ID" value="NM_001253353.1"/>
</dbReference>
<dbReference type="RefSeq" id="NP_001240283.1">
    <property type="nucleotide sequence ID" value="NM_001253354.1"/>
</dbReference>
<dbReference type="RefSeq" id="NP_766279.1">
    <property type="nucleotide sequence ID" value="NM_172691.3"/>
</dbReference>
<dbReference type="RefSeq" id="XP_006537885.1">
    <property type="nucleotide sequence ID" value="XM_006537822.3"/>
</dbReference>
<dbReference type="RefSeq" id="XP_006537886.1">
    <property type="nucleotide sequence ID" value="XM_006537823.4"/>
</dbReference>
<dbReference type="RefSeq" id="XP_006537887.1">
    <property type="nucleotide sequence ID" value="XM_006537824.1"/>
</dbReference>
<dbReference type="RefSeq" id="XP_011248296.1">
    <property type="nucleotide sequence ID" value="XM_011249994.2"/>
</dbReference>
<dbReference type="RefSeq" id="XP_017175614.1">
    <property type="nucleotide sequence ID" value="XM_017320125.3"/>
</dbReference>
<dbReference type="RefSeq" id="XP_030109272.1">
    <property type="nucleotide sequence ID" value="XM_030253412.2"/>
</dbReference>
<dbReference type="BioGRID" id="230930">
    <property type="interactions" value="2"/>
</dbReference>
<dbReference type="FunCoup" id="Q8BR27">
    <property type="interactions" value="1348"/>
</dbReference>
<dbReference type="STRING" id="10090.ENSMUSP00000103592"/>
<dbReference type="GlyGen" id="Q8BR27">
    <property type="glycosylation" value="2 sites, 1 O-linked glycan (1 site)"/>
</dbReference>
<dbReference type="iPTMnet" id="Q8BR27"/>
<dbReference type="PhosphoSitePlus" id="Q8BR27"/>
<dbReference type="PaxDb" id="10090-ENSMUSP00000103592"/>
<dbReference type="ProteomicsDB" id="275828"/>
<dbReference type="Antibodypedia" id="56170">
    <property type="antibodies" value="20 antibodies from 8 providers"/>
</dbReference>
<dbReference type="Ensembl" id="ENSMUST00000036462.12">
    <property type="protein sequence ID" value="ENSMUSP00000038177.6"/>
    <property type="gene ID" value="ENSMUSG00000036002.13"/>
</dbReference>
<dbReference type="Ensembl" id="ENSMUST00000107956.8">
    <property type="protein sequence ID" value="ENSMUSP00000103590.2"/>
    <property type="gene ID" value="ENSMUSG00000036002.13"/>
</dbReference>
<dbReference type="Ensembl" id="ENSMUST00000107957.8">
    <property type="protein sequence ID" value="ENSMUSP00000103591.2"/>
    <property type="gene ID" value="ENSMUSG00000036002.13"/>
</dbReference>
<dbReference type="Ensembl" id="ENSMUST00000107958.8">
    <property type="protein sequence ID" value="ENSMUSP00000103592.2"/>
    <property type="gene ID" value="ENSMUSG00000036002.13"/>
</dbReference>
<dbReference type="Ensembl" id="ENSMUST00000107959.8">
    <property type="protein sequence ID" value="ENSMUSP00000103593.2"/>
    <property type="gene ID" value="ENSMUSG00000036002.13"/>
</dbReference>
<dbReference type="GeneID" id="230088"/>
<dbReference type="KEGG" id="mmu:230088"/>
<dbReference type="UCSC" id="uc008soz.2">
    <property type="organism name" value="mouse"/>
</dbReference>
<dbReference type="AGR" id="MGI:2441854"/>
<dbReference type="CTD" id="80256"/>
<dbReference type="MGI" id="MGI:2441854">
    <property type="gene designation" value="Atosb"/>
</dbReference>
<dbReference type="VEuPathDB" id="HostDB:ENSMUSG00000036002"/>
<dbReference type="eggNOG" id="KOG2306">
    <property type="taxonomic scope" value="Eukaryota"/>
</dbReference>
<dbReference type="GeneTree" id="ENSGT00940000159834"/>
<dbReference type="HOGENOM" id="CLU_031463_0_0_1"/>
<dbReference type="InParanoid" id="Q8BR27"/>
<dbReference type="OMA" id="NGHSHER"/>
<dbReference type="OrthoDB" id="8625101at2759"/>
<dbReference type="PhylomeDB" id="Q8BR27"/>
<dbReference type="TreeFam" id="TF325496"/>
<dbReference type="BioGRID-ORCS" id="230088">
    <property type="hits" value="5 hits in 76 CRISPR screens"/>
</dbReference>
<dbReference type="ChiTaRS" id="Fam214b">
    <property type="organism name" value="mouse"/>
</dbReference>
<dbReference type="PRO" id="PR:Q8BR27"/>
<dbReference type="Proteomes" id="UP000000589">
    <property type="component" value="Chromosome 4"/>
</dbReference>
<dbReference type="RNAct" id="Q8BR27">
    <property type="molecule type" value="protein"/>
</dbReference>
<dbReference type="Bgee" id="ENSMUSG00000036002">
    <property type="expression patterns" value="Expressed in ascending aorta and 222 other cell types or tissues"/>
</dbReference>
<dbReference type="ExpressionAtlas" id="Q8BR27">
    <property type="expression patterns" value="baseline and differential"/>
</dbReference>
<dbReference type="GO" id="GO:0005634">
    <property type="term" value="C:nucleus"/>
    <property type="evidence" value="ECO:0007669"/>
    <property type="project" value="UniProtKB-SubCell"/>
</dbReference>
<dbReference type="InterPro" id="IPR033473">
    <property type="entry name" value="Atos-like_C"/>
</dbReference>
<dbReference type="InterPro" id="IPR025261">
    <property type="entry name" value="Atos-like_cons_dom"/>
</dbReference>
<dbReference type="InterPro" id="IPR051506">
    <property type="entry name" value="ATOS_Transcription_Regulators"/>
</dbReference>
<dbReference type="PANTHER" id="PTHR13199:SF12">
    <property type="entry name" value="ATOS HOMOLOG PROTEIN B"/>
    <property type="match status" value="1"/>
</dbReference>
<dbReference type="PANTHER" id="PTHR13199">
    <property type="entry name" value="GH03947P"/>
    <property type="match status" value="1"/>
</dbReference>
<dbReference type="Pfam" id="PF13889">
    <property type="entry name" value="Chromosome_seg"/>
    <property type="match status" value="1"/>
</dbReference>
<dbReference type="Pfam" id="PF13915">
    <property type="entry name" value="DUF4210"/>
    <property type="match status" value="1"/>
</dbReference>
<dbReference type="SMART" id="SM01177">
    <property type="entry name" value="DUF4210"/>
    <property type="match status" value="1"/>
</dbReference>
<protein>
    <recommendedName>
        <fullName>Atos homolog protein B</fullName>
    </recommendedName>
</protein>
<accession>Q8BR27</accession>
<accession>B0QZW6</accession>
<accession>Q3TTG5</accession>
<accession>Q3U3I3</accession>
<accession>Q3UEC3</accession>
<accession>Q69ZG9</accession>
<accession>Q6IR39</accession>
<gene>
    <name evidence="6" type="primary">Atosb</name>
    <name evidence="6" type="synonym">Fam214b</name>
    <name evidence="6" type="synonym">Kiaa1539</name>
</gene>
<evidence type="ECO:0000250" key="1">
    <source>
        <dbReference type="UniProtKB" id="Q7JXG9"/>
    </source>
</evidence>
<evidence type="ECO:0000256" key="2">
    <source>
        <dbReference type="SAM" id="MobiDB-lite"/>
    </source>
</evidence>
<evidence type="ECO:0000269" key="3">
    <source>
    </source>
</evidence>
<evidence type="ECO:0000305" key="4"/>
<evidence type="ECO:0000305" key="5">
    <source>
    </source>
</evidence>
<evidence type="ECO:0000312" key="6">
    <source>
        <dbReference type="MGI" id="MGI:2441854"/>
    </source>
</evidence>
<evidence type="ECO:0007744" key="7">
    <source>
    </source>
</evidence>
<keyword id="KW-0539">Nucleus</keyword>
<keyword id="KW-0597">Phosphoprotein</keyword>
<keyword id="KW-1185">Reference proteome</keyword>
<organism>
    <name type="scientific">Mus musculus</name>
    <name type="common">Mouse</name>
    <dbReference type="NCBI Taxonomy" id="10090"/>
    <lineage>
        <taxon>Eukaryota</taxon>
        <taxon>Metazoa</taxon>
        <taxon>Chordata</taxon>
        <taxon>Craniata</taxon>
        <taxon>Vertebrata</taxon>
        <taxon>Euteleostomi</taxon>
        <taxon>Mammalia</taxon>
        <taxon>Eutheria</taxon>
        <taxon>Euarchontoglires</taxon>
        <taxon>Glires</taxon>
        <taxon>Rodentia</taxon>
        <taxon>Myomorpha</taxon>
        <taxon>Muroidea</taxon>
        <taxon>Muridae</taxon>
        <taxon>Murinae</taxon>
        <taxon>Mus</taxon>
        <taxon>Mus</taxon>
    </lineage>
</organism>
<reference key="1">
    <citation type="journal article" date="2005" name="Science">
        <title>The transcriptional landscape of the mammalian genome.</title>
        <authorList>
            <person name="Carninci P."/>
            <person name="Kasukawa T."/>
            <person name="Katayama S."/>
            <person name="Gough J."/>
            <person name="Frith M.C."/>
            <person name="Maeda N."/>
            <person name="Oyama R."/>
            <person name="Ravasi T."/>
            <person name="Lenhard B."/>
            <person name="Wells C."/>
            <person name="Kodzius R."/>
            <person name="Shimokawa K."/>
            <person name="Bajic V.B."/>
            <person name="Brenner S.E."/>
            <person name="Batalov S."/>
            <person name="Forrest A.R."/>
            <person name="Zavolan M."/>
            <person name="Davis M.J."/>
            <person name="Wilming L.G."/>
            <person name="Aidinis V."/>
            <person name="Allen J.E."/>
            <person name="Ambesi-Impiombato A."/>
            <person name="Apweiler R."/>
            <person name="Aturaliya R.N."/>
            <person name="Bailey T.L."/>
            <person name="Bansal M."/>
            <person name="Baxter L."/>
            <person name="Beisel K.W."/>
            <person name="Bersano T."/>
            <person name="Bono H."/>
            <person name="Chalk A.M."/>
            <person name="Chiu K.P."/>
            <person name="Choudhary V."/>
            <person name="Christoffels A."/>
            <person name="Clutterbuck D.R."/>
            <person name="Crowe M.L."/>
            <person name="Dalla E."/>
            <person name="Dalrymple B.P."/>
            <person name="de Bono B."/>
            <person name="Della Gatta G."/>
            <person name="di Bernardo D."/>
            <person name="Down T."/>
            <person name="Engstrom P."/>
            <person name="Fagiolini M."/>
            <person name="Faulkner G."/>
            <person name="Fletcher C.F."/>
            <person name="Fukushima T."/>
            <person name="Furuno M."/>
            <person name="Futaki S."/>
            <person name="Gariboldi M."/>
            <person name="Georgii-Hemming P."/>
            <person name="Gingeras T.R."/>
            <person name="Gojobori T."/>
            <person name="Green R.E."/>
            <person name="Gustincich S."/>
            <person name="Harbers M."/>
            <person name="Hayashi Y."/>
            <person name="Hensch T.K."/>
            <person name="Hirokawa N."/>
            <person name="Hill D."/>
            <person name="Huminiecki L."/>
            <person name="Iacono M."/>
            <person name="Ikeo K."/>
            <person name="Iwama A."/>
            <person name="Ishikawa T."/>
            <person name="Jakt M."/>
            <person name="Kanapin A."/>
            <person name="Katoh M."/>
            <person name="Kawasawa Y."/>
            <person name="Kelso J."/>
            <person name="Kitamura H."/>
            <person name="Kitano H."/>
            <person name="Kollias G."/>
            <person name="Krishnan S.P."/>
            <person name="Kruger A."/>
            <person name="Kummerfeld S.K."/>
            <person name="Kurochkin I.V."/>
            <person name="Lareau L.F."/>
            <person name="Lazarevic D."/>
            <person name="Lipovich L."/>
            <person name="Liu J."/>
            <person name="Liuni S."/>
            <person name="McWilliam S."/>
            <person name="Madan Babu M."/>
            <person name="Madera M."/>
            <person name="Marchionni L."/>
            <person name="Matsuda H."/>
            <person name="Matsuzawa S."/>
            <person name="Miki H."/>
            <person name="Mignone F."/>
            <person name="Miyake S."/>
            <person name="Morris K."/>
            <person name="Mottagui-Tabar S."/>
            <person name="Mulder N."/>
            <person name="Nakano N."/>
            <person name="Nakauchi H."/>
            <person name="Ng P."/>
            <person name="Nilsson R."/>
            <person name="Nishiguchi S."/>
            <person name="Nishikawa S."/>
            <person name="Nori F."/>
            <person name="Ohara O."/>
            <person name="Okazaki Y."/>
            <person name="Orlando V."/>
            <person name="Pang K.C."/>
            <person name="Pavan W.J."/>
            <person name="Pavesi G."/>
            <person name="Pesole G."/>
            <person name="Petrovsky N."/>
            <person name="Piazza S."/>
            <person name="Reed J."/>
            <person name="Reid J.F."/>
            <person name="Ring B.Z."/>
            <person name="Ringwald M."/>
            <person name="Rost B."/>
            <person name="Ruan Y."/>
            <person name="Salzberg S.L."/>
            <person name="Sandelin A."/>
            <person name="Schneider C."/>
            <person name="Schoenbach C."/>
            <person name="Sekiguchi K."/>
            <person name="Semple C.A."/>
            <person name="Seno S."/>
            <person name="Sessa L."/>
            <person name="Sheng Y."/>
            <person name="Shibata Y."/>
            <person name="Shimada H."/>
            <person name="Shimada K."/>
            <person name="Silva D."/>
            <person name="Sinclair B."/>
            <person name="Sperling S."/>
            <person name="Stupka E."/>
            <person name="Sugiura K."/>
            <person name="Sultana R."/>
            <person name="Takenaka Y."/>
            <person name="Taki K."/>
            <person name="Tammoja K."/>
            <person name="Tan S.L."/>
            <person name="Tang S."/>
            <person name="Taylor M.S."/>
            <person name="Tegner J."/>
            <person name="Teichmann S.A."/>
            <person name="Ueda H.R."/>
            <person name="van Nimwegen E."/>
            <person name="Verardo R."/>
            <person name="Wei C.L."/>
            <person name="Yagi K."/>
            <person name="Yamanishi H."/>
            <person name="Zabarovsky E."/>
            <person name="Zhu S."/>
            <person name="Zimmer A."/>
            <person name="Hide W."/>
            <person name="Bult C."/>
            <person name="Grimmond S.M."/>
            <person name="Teasdale R.D."/>
            <person name="Liu E.T."/>
            <person name="Brusic V."/>
            <person name="Quackenbush J."/>
            <person name="Wahlestedt C."/>
            <person name="Mattick J.S."/>
            <person name="Hume D.A."/>
            <person name="Kai C."/>
            <person name="Sasaki D."/>
            <person name="Tomaru Y."/>
            <person name="Fukuda S."/>
            <person name="Kanamori-Katayama M."/>
            <person name="Suzuki M."/>
            <person name="Aoki J."/>
            <person name="Arakawa T."/>
            <person name="Iida J."/>
            <person name="Imamura K."/>
            <person name="Itoh M."/>
            <person name="Kato T."/>
            <person name="Kawaji H."/>
            <person name="Kawagashira N."/>
            <person name="Kawashima T."/>
            <person name="Kojima M."/>
            <person name="Kondo S."/>
            <person name="Konno H."/>
            <person name="Nakano K."/>
            <person name="Ninomiya N."/>
            <person name="Nishio T."/>
            <person name="Okada M."/>
            <person name="Plessy C."/>
            <person name="Shibata K."/>
            <person name="Shiraki T."/>
            <person name="Suzuki S."/>
            <person name="Tagami M."/>
            <person name="Waki K."/>
            <person name="Watahiki A."/>
            <person name="Okamura-Oho Y."/>
            <person name="Suzuki H."/>
            <person name="Kawai J."/>
            <person name="Hayashizaki Y."/>
        </authorList>
    </citation>
    <scope>NUCLEOTIDE SEQUENCE [LARGE SCALE MRNA]</scope>
    <source>
        <strain>C57BL/6J</strain>
        <strain>NOD</strain>
        <tissue>Bone marrow</tissue>
        <tissue>Corpora quadrigemina</tissue>
        <tissue>Dendritic cell</tissue>
        <tissue>Testis</tissue>
    </source>
</reference>
<reference key="2">
    <citation type="journal article" date="2009" name="PLoS Biol.">
        <title>Lineage-specific biology revealed by a finished genome assembly of the mouse.</title>
        <authorList>
            <person name="Church D.M."/>
            <person name="Goodstadt L."/>
            <person name="Hillier L.W."/>
            <person name="Zody M.C."/>
            <person name="Goldstein S."/>
            <person name="She X."/>
            <person name="Bult C.J."/>
            <person name="Agarwala R."/>
            <person name="Cherry J.L."/>
            <person name="DiCuccio M."/>
            <person name="Hlavina W."/>
            <person name="Kapustin Y."/>
            <person name="Meric P."/>
            <person name="Maglott D."/>
            <person name="Birtle Z."/>
            <person name="Marques A.C."/>
            <person name="Graves T."/>
            <person name="Zhou S."/>
            <person name="Teague B."/>
            <person name="Potamousis K."/>
            <person name="Churas C."/>
            <person name="Place M."/>
            <person name="Herschleb J."/>
            <person name="Runnheim R."/>
            <person name="Forrest D."/>
            <person name="Amos-Landgraf J."/>
            <person name="Schwartz D.C."/>
            <person name="Cheng Z."/>
            <person name="Lindblad-Toh K."/>
            <person name="Eichler E.E."/>
            <person name="Ponting C.P."/>
        </authorList>
    </citation>
    <scope>NUCLEOTIDE SEQUENCE [LARGE SCALE GENOMIC DNA]</scope>
    <source>
        <strain>C57BL/6J</strain>
    </source>
</reference>
<reference key="3">
    <citation type="journal article" date="2004" name="Genome Res.">
        <title>The status, quality, and expansion of the NIH full-length cDNA project: the Mammalian Gene Collection (MGC).</title>
        <authorList>
            <consortium name="The MGC Project Team"/>
        </authorList>
    </citation>
    <scope>NUCLEOTIDE SEQUENCE [LARGE SCALE MRNA]</scope>
    <source>
        <strain>C57BL/6J</strain>
        <tissue>Brain</tissue>
        <tissue>Eye</tissue>
    </source>
</reference>
<reference key="4">
    <citation type="journal article" date="2004" name="DNA Res.">
        <title>Prediction of the coding sequences of mouse homologues of KIAA gene: IV. The complete nucleotide sequences of 500 mouse KIAA-homologous cDNAs identified by screening of terminal sequences of cDNA clones randomly sampled from size-fractionated libraries.</title>
        <authorList>
            <person name="Okazaki N."/>
            <person name="Kikuno R."/>
            <person name="Ohara R."/>
            <person name="Inamoto S."/>
            <person name="Koseki H."/>
            <person name="Hiraoka S."/>
            <person name="Saga Y."/>
            <person name="Seino S."/>
            <person name="Nishimura M."/>
            <person name="Kaisho T."/>
            <person name="Hoshino K."/>
            <person name="Kitamura H."/>
            <person name="Nagase T."/>
            <person name="Ohara O."/>
            <person name="Koga H."/>
        </authorList>
    </citation>
    <scope>NUCLEOTIDE SEQUENCE [LARGE SCALE MRNA] OF 308-538</scope>
    <source>
        <tissue>Pancreatic islet</tissue>
    </source>
</reference>
<reference key="5">
    <citation type="journal article" date="2010" name="Cell">
        <title>A tissue-specific atlas of mouse protein phosphorylation and expression.</title>
        <authorList>
            <person name="Huttlin E.L."/>
            <person name="Jedrychowski M.P."/>
            <person name="Elias J.E."/>
            <person name="Goswami T."/>
            <person name="Rad R."/>
            <person name="Beausoleil S.A."/>
            <person name="Villen J."/>
            <person name="Haas W."/>
            <person name="Sowa M.E."/>
            <person name="Gygi S.P."/>
        </authorList>
    </citation>
    <scope>PHOSPHORYLATION [LARGE SCALE ANALYSIS] AT SER-254 AND SER-255</scope>
    <scope>IDENTIFICATION BY MASS SPECTROMETRY [LARGE SCALE ANALYSIS]</scope>
    <source>
        <tissue>Spleen</tissue>
    </source>
</reference>
<reference key="6">
    <citation type="journal article" date="2022" name="EMBO J.">
        <title>Macrophage mitochondrial bioenergetics and tissue invasion are boosted by an Atossa-Porthos axis in Drosophila.</title>
        <authorList>
            <person name="Emtenani S."/>
            <person name="Martin E.T."/>
            <person name="Gyoergy A."/>
            <person name="Bicher J."/>
            <person name="Genger J.W."/>
            <person name="Koecher T."/>
            <person name="Akhmanova M."/>
            <person name="Guarda M."/>
            <person name="Roblek M."/>
            <person name="Bergthaler A."/>
            <person name="Hurd T.R."/>
            <person name="Rangan P."/>
            <person name="Siekhaus D.E."/>
        </authorList>
    </citation>
    <scope>FUNCTION</scope>
    <scope>DOMAIN</scope>
</reference>
<feature type="chain" id="PRO_0000313622" description="Atos homolog protein B">
    <location>
        <begin position="1"/>
        <end position="538"/>
    </location>
</feature>
<feature type="region of interest" description="Disordered" evidence="2">
    <location>
        <begin position="1"/>
        <end position="99"/>
    </location>
</feature>
<feature type="region of interest" description="Disordered" evidence="2">
    <location>
        <begin position="165"/>
        <end position="185"/>
    </location>
</feature>
<feature type="region of interest" description="Disordered" evidence="2">
    <location>
        <begin position="199"/>
        <end position="270"/>
    </location>
</feature>
<feature type="region of interest" description="Required for macropage invasion" evidence="3">
    <location>
        <begin position="348"/>
        <end position="430"/>
    </location>
</feature>
<feature type="region of interest" description="Transactivation domain 1 (TAD1)" evidence="3">
    <location>
        <begin position="436"/>
        <end position="444"/>
    </location>
</feature>
<feature type="compositionally biased region" description="Pro residues" evidence="2">
    <location>
        <begin position="227"/>
        <end position="238"/>
    </location>
</feature>
<feature type="modified residue" description="Phosphoserine" evidence="7">
    <location>
        <position position="254"/>
    </location>
</feature>
<feature type="modified residue" description="Phosphoserine" evidence="7">
    <location>
        <position position="255"/>
    </location>
</feature>
<feature type="sequence conflict" description="In Ref. 1; BAE36360." evidence="4" ref="1">
    <original>A</original>
    <variation>T</variation>
    <location>
        <position position="57"/>
    </location>
</feature>
<feature type="sequence conflict" description="In Ref. 2; CAQ12875." evidence="4" ref="2">
    <location>
        <position position="241"/>
    </location>
</feature>
<feature type="sequence conflict" description="In Ref. 3; AAH71191." evidence="4" ref="3">
    <original>A</original>
    <variation>P</variation>
    <location>
        <position position="261"/>
    </location>
</feature>
<feature type="sequence conflict" description="In Ref. 1; BAE28988." evidence="4" ref="1">
    <original>R</original>
    <variation>G</variation>
    <location>
        <position position="325"/>
    </location>
</feature>
<feature type="sequence conflict" description="In Ref. 1; BAE32803." evidence="4" ref="1">
    <original>D</original>
    <variation>G</variation>
    <location>
        <position position="515"/>
    </location>
</feature>
<name>ATOSB_MOUSE</name>
<proteinExistence type="evidence at protein level"/>
<comment type="function">
    <text evidence="3">Transcription regulator that syncronizes transcriptional and translational programs to promote macrophage invasion of tissues.</text>
</comment>
<comment type="subcellular location">
    <subcellularLocation>
        <location evidence="1">Nucleus</location>
    </subcellularLocation>
</comment>
<comment type="domain">
    <text evidence="5">The protein contains a transactivation domain (TAD) which may be required for transcriptional activation of a subset of target genes.</text>
</comment>
<comment type="similarity">
    <text evidence="4">Belongs to the ATOS family.</text>
</comment>
<comment type="sequence caution" evidence="4">
    <conflict type="erroneous gene model prediction">
        <sequence resource="EMBL-CDS" id="CAQ12875"/>
    </conflict>
</comment>